<proteinExistence type="inferred from homology"/>
<keyword id="KW-0050">Antiport</keyword>
<keyword id="KW-1003">Cell membrane</keyword>
<keyword id="KW-0406">Ion transport</keyword>
<keyword id="KW-0472">Membrane</keyword>
<keyword id="KW-0915">Sodium</keyword>
<keyword id="KW-0739">Sodium transport</keyword>
<keyword id="KW-0812">Transmembrane</keyword>
<keyword id="KW-1133">Transmembrane helix</keyword>
<keyword id="KW-0813">Transport</keyword>
<gene>
    <name evidence="1" type="primary">nhaA2</name>
    <name type="ordered locus">Cbei_2932</name>
</gene>
<name>NHAA2_CLOB8</name>
<comment type="function">
    <text evidence="1">Na(+)/H(+) antiporter that extrudes sodium in exchange for external protons.</text>
</comment>
<comment type="catalytic activity">
    <reaction evidence="1">
        <text>Na(+)(in) + 2 H(+)(out) = Na(+)(out) + 2 H(+)(in)</text>
        <dbReference type="Rhea" id="RHEA:29251"/>
        <dbReference type="ChEBI" id="CHEBI:15378"/>
        <dbReference type="ChEBI" id="CHEBI:29101"/>
    </reaction>
    <physiologicalReaction direction="left-to-right" evidence="1">
        <dbReference type="Rhea" id="RHEA:29252"/>
    </physiologicalReaction>
</comment>
<comment type="subcellular location">
    <subcellularLocation>
        <location evidence="1">Cell membrane</location>
        <topology evidence="1">Multi-pass membrane protein</topology>
    </subcellularLocation>
</comment>
<comment type="similarity">
    <text evidence="1">Belongs to the NhaA Na(+)/H(+) (TC 2.A.33) antiporter family.</text>
</comment>
<dbReference type="EMBL" id="CP000721">
    <property type="protein sequence ID" value="ABR35075.1"/>
    <property type="molecule type" value="Genomic_DNA"/>
</dbReference>
<dbReference type="RefSeq" id="WP_012059128.1">
    <property type="nucleotide sequence ID" value="NC_009617.1"/>
</dbReference>
<dbReference type="SMR" id="A6LXJ5"/>
<dbReference type="KEGG" id="cbe:Cbei_2932"/>
<dbReference type="eggNOG" id="COG3004">
    <property type="taxonomic scope" value="Bacteria"/>
</dbReference>
<dbReference type="HOGENOM" id="CLU_015803_1_2_9"/>
<dbReference type="Proteomes" id="UP000000565">
    <property type="component" value="Chromosome"/>
</dbReference>
<dbReference type="GO" id="GO:0005886">
    <property type="term" value="C:plasma membrane"/>
    <property type="evidence" value="ECO:0007669"/>
    <property type="project" value="UniProtKB-SubCell"/>
</dbReference>
<dbReference type="GO" id="GO:0015385">
    <property type="term" value="F:sodium:proton antiporter activity"/>
    <property type="evidence" value="ECO:0007669"/>
    <property type="project" value="TreeGrafter"/>
</dbReference>
<dbReference type="GO" id="GO:0006885">
    <property type="term" value="P:regulation of pH"/>
    <property type="evidence" value="ECO:0007669"/>
    <property type="project" value="InterPro"/>
</dbReference>
<dbReference type="Gene3D" id="1.20.1530.10">
    <property type="entry name" value="Na+/H+ antiporter like domain"/>
    <property type="match status" value="1"/>
</dbReference>
<dbReference type="HAMAP" id="MF_01844">
    <property type="entry name" value="NhaA"/>
    <property type="match status" value="1"/>
</dbReference>
<dbReference type="InterPro" id="IPR023171">
    <property type="entry name" value="Na/H_antiporter_dom_sf"/>
</dbReference>
<dbReference type="InterPro" id="IPR004670">
    <property type="entry name" value="NhaA"/>
</dbReference>
<dbReference type="NCBIfam" id="TIGR00773">
    <property type="entry name" value="NhaA"/>
    <property type="match status" value="1"/>
</dbReference>
<dbReference type="NCBIfam" id="NF007111">
    <property type="entry name" value="PRK09560.1"/>
    <property type="match status" value="1"/>
</dbReference>
<dbReference type="NCBIfam" id="NF007112">
    <property type="entry name" value="PRK09561.1"/>
    <property type="match status" value="1"/>
</dbReference>
<dbReference type="PANTHER" id="PTHR30341:SF0">
    <property type="entry name" value="NA(+)_H(+) ANTIPORTER NHAA"/>
    <property type="match status" value="1"/>
</dbReference>
<dbReference type="PANTHER" id="PTHR30341">
    <property type="entry name" value="SODIUM ION/PROTON ANTIPORTER NHAA-RELATED"/>
    <property type="match status" value="1"/>
</dbReference>
<dbReference type="Pfam" id="PF06965">
    <property type="entry name" value="Na_H_antiport_1"/>
    <property type="match status" value="1"/>
</dbReference>
<feature type="chain" id="PRO_0000334270" description="Na(+)/H(+) antiporter NhaA 2">
    <location>
        <begin position="1"/>
        <end position="404"/>
    </location>
</feature>
<feature type="transmembrane region" description="Helical" evidence="1">
    <location>
        <begin position="24"/>
        <end position="44"/>
    </location>
</feature>
<feature type="transmembrane region" description="Helical" evidence="1">
    <location>
        <begin position="67"/>
        <end position="87"/>
    </location>
</feature>
<feature type="transmembrane region" description="Helical" evidence="1">
    <location>
        <begin position="103"/>
        <end position="123"/>
    </location>
</feature>
<feature type="transmembrane region" description="Helical" evidence="1">
    <location>
        <begin position="132"/>
        <end position="152"/>
    </location>
</feature>
<feature type="transmembrane region" description="Helical" evidence="1">
    <location>
        <begin position="161"/>
        <end position="181"/>
    </location>
</feature>
<feature type="transmembrane region" description="Helical" evidence="1">
    <location>
        <begin position="184"/>
        <end position="204"/>
    </location>
</feature>
<feature type="transmembrane region" description="Helical" evidence="1">
    <location>
        <begin position="216"/>
        <end position="236"/>
    </location>
</feature>
<feature type="transmembrane region" description="Helical" evidence="1">
    <location>
        <begin position="266"/>
        <end position="286"/>
    </location>
</feature>
<feature type="transmembrane region" description="Helical" evidence="1">
    <location>
        <begin position="303"/>
        <end position="323"/>
    </location>
</feature>
<feature type="transmembrane region" description="Helical" evidence="1">
    <location>
        <begin position="339"/>
        <end position="359"/>
    </location>
</feature>
<feature type="transmembrane region" description="Helical" evidence="1">
    <location>
        <begin position="372"/>
        <end position="392"/>
    </location>
</feature>
<evidence type="ECO:0000255" key="1">
    <source>
        <dbReference type="HAMAP-Rule" id="MF_01844"/>
    </source>
</evidence>
<protein>
    <recommendedName>
        <fullName evidence="1">Na(+)/H(+) antiporter NhaA 2</fullName>
    </recommendedName>
    <alternativeName>
        <fullName evidence="1">Sodium/proton antiporter NhaA 2</fullName>
    </alternativeName>
</protein>
<sequence length="404" mass="44028">MKDKIKTKILSPFLYFLKSESSSGIILLICAIAAIMIANSSFSGGYEHIFHTNITIGYGVFSLSMSVLHWINDGLMAIFFLVVGMEIKREVVFGELKSFKRTILPISAAIGGMIVPAIIYALFNYKEPTITGWGIPMATDIAFALGMLSLVAKNAPKGIVVFLTALAIVDDLGAIIVIAIFYNSQISWIALLLGLIVFATLILANKFKIKYTSIYIILGIILWICLLKSGIHATIAGVLLGMSLPIGENIHKFKTSILYKLEHILTPWSSFVIMPIFAFANAGIIINTDNFSGSLFSPASLGIIFGLFVGKQIGIFGTSFILIKLKIAKFPSNVTKRHLYGASVFGGIGFTMSIFVSSLSFADANILSEAKMCIMIASILAATYGTIVFKFINFKNEKLNYKQS</sequence>
<reference key="1">
    <citation type="submission" date="2007-06" db="EMBL/GenBank/DDBJ databases">
        <title>Complete sequence of Clostridium beijerinckii NCIMB 8052.</title>
        <authorList>
            <consortium name="US DOE Joint Genome Institute"/>
            <person name="Copeland A."/>
            <person name="Lucas S."/>
            <person name="Lapidus A."/>
            <person name="Barry K."/>
            <person name="Detter J.C."/>
            <person name="Glavina del Rio T."/>
            <person name="Hammon N."/>
            <person name="Israni S."/>
            <person name="Dalin E."/>
            <person name="Tice H."/>
            <person name="Pitluck S."/>
            <person name="Sims D."/>
            <person name="Brettin T."/>
            <person name="Bruce D."/>
            <person name="Tapia R."/>
            <person name="Brainard J."/>
            <person name="Schmutz J."/>
            <person name="Larimer F."/>
            <person name="Land M."/>
            <person name="Hauser L."/>
            <person name="Kyrpides N."/>
            <person name="Mikhailova N."/>
            <person name="Bennet G."/>
            <person name="Cann I."/>
            <person name="Chen J.-S."/>
            <person name="Contreras A.L."/>
            <person name="Jones D."/>
            <person name="Kashket E."/>
            <person name="Mitchell W."/>
            <person name="Stoddard S."/>
            <person name="Schwarz W."/>
            <person name="Qureshi N."/>
            <person name="Young M."/>
            <person name="Shi Z."/>
            <person name="Ezeji T."/>
            <person name="White B."/>
            <person name="Blaschek H."/>
            <person name="Richardson P."/>
        </authorList>
    </citation>
    <scope>NUCLEOTIDE SEQUENCE [LARGE SCALE GENOMIC DNA]</scope>
    <source>
        <strain>ATCC 51743 / NCIMB 8052</strain>
    </source>
</reference>
<accession>A6LXJ5</accession>
<organism>
    <name type="scientific">Clostridium beijerinckii (strain ATCC 51743 / NCIMB 8052)</name>
    <name type="common">Clostridium acetobutylicum</name>
    <dbReference type="NCBI Taxonomy" id="290402"/>
    <lineage>
        <taxon>Bacteria</taxon>
        <taxon>Bacillati</taxon>
        <taxon>Bacillota</taxon>
        <taxon>Clostridia</taxon>
        <taxon>Eubacteriales</taxon>
        <taxon>Clostridiaceae</taxon>
        <taxon>Clostridium</taxon>
    </lineage>
</organism>